<protein>
    <recommendedName>
        <fullName evidence="1">Large ribosomal subunit protein uL13</fullName>
    </recommendedName>
    <alternativeName>
        <fullName evidence="2">50S ribosomal protein L13</fullName>
    </alternativeName>
</protein>
<evidence type="ECO:0000255" key="1">
    <source>
        <dbReference type="HAMAP-Rule" id="MF_01366"/>
    </source>
</evidence>
<evidence type="ECO:0000305" key="2"/>
<organism>
    <name type="scientific">Chlorobaculum parvum (strain DSM 263 / NCIMB 8327)</name>
    <name type="common">Chlorobium vibrioforme subsp. thiosulfatophilum</name>
    <dbReference type="NCBI Taxonomy" id="517417"/>
    <lineage>
        <taxon>Bacteria</taxon>
        <taxon>Pseudomonadati</taxon>
        <taxon>Chlorobiota</taxon>
        <taxon>Chlorobiia</taxon>
        <taxon>Chlorobiales</taxon>
        <taxon>Chlorobiaceae</taxon>
        <taxon>Chlorobaculum</taxon>
    </lineage>
</organism>
<gene>
    <name evidence="1" type="primary">rplM</name>
    <name type="ordered locus">Cpar_0423</name>
</gene>
<dbReference type="EMBL" id="CP001099">
    <property type="protein sequence ID" value="ACF10845.1"/>
    <property type="molecule type" value="Genomic_DNA"/>
</dbReference>
<dbReference type="RefSeq" id="WP_012501678.1">
    <property type="nucleotide sequence ID" value="NC_011027.1"/>
</dbReference>
<dbReference type="SMR" id="B3QLF5"/>
<dbReference type="STRING" id="517417.Cpar_0423"/>
<dbReference type="KEGG" id="cpc:Cpar_0423"/>
<dbReference type="eggNOG" id="COG0102">
    <property type="taxonomic scope" value="Bacteria"/>
</dbReference>
<dbReference type="HOGENOM" id="CLU_082184_2_2_10"/>
<dbReference type="OrthoDB" id="9801330at2"/>
<dbReference type="Proteomes" id="UP000008811">
    <property type="component" value="Chromosome"/>
</dbReference>
<dbReference type="GO" id="GO:0022625">
    <property type="term" value="C:cytosolic large ribosomal subunit"/>
    <property type="evidence" value="ECO:0007669"/>
    <property type="project" value="TreeGrafter"/>
</dbReference>
<dbReference type="GO" id="GO:0003729">
    <property type="term" value="F:mRNA binding"/>
    <property type="evidence" value="ECO:0007669"/>
    <property type="project" value="TreeGrafter"/>
</dbReference>
<dbReference type="GO" id="GO:0003735">
    <property type="term" value="F:structural constituent of ribosome"/>
    <property type="evidence" value="ECO:0007669"/>
    <property type="project" value="InterPro"/>
</dbReference>
<dbReference type="GO" id="GO:0017148">
    <property type="term" value="P:negative regulation of translation"/>
    <property type="evidence" value="ECO:0007669"/>
    <property type="project" value="TreeGrafter"/>
</dbReference>
<dbReference type="GO" id="GO:0006412">
    <property type="term" value="P:translation"/>
    <property type="evidence" value="ECO:0007669"/>
    <property type="project" value="UniProtKB-UniRule"/>
</dbReference>
<dbReference type="CDD" id="cd00392">
    <property type="entry name" value="Ribosomal_L13"/>
    <property type="match status" value="1"/>
</dbReference>
<dbReference type="FunFam" id="3.90.1180.10:FF:000001">
    <property type="entry name" value="50S ribosomal protein L13"/>
    <property type="match status" value="1"/>
</dbReference>
<dbReference type="Gene3D" id="3.90.1180.10">
    <property type="entry name" value="Ribosomal protein L13"/>
    <property type="match status" value="1"/>
</dbReference>
<dbReference type="HAMAP" id="MF_01366">
    <property type="entry name" value="Ribosomal_uL13"/>
    <property type="match status" value="1"/>
</dbReference>
<dbReference type="InterPro" id="IPR005822">
    <property type="entry name" value="Ribosomal_uL13"/>
</dbReference>
<dbReference type="InterPro" id="IPR005823">
    <property type="entry name" value="Ribosomal_uL13_bac-type"/>
</dbReference>
<dbReference type="InterPro" id="IPR036899">
    <property type="entry name" value="Ribosomal_uL13_sf"/>
</dbReference>
<dbReference type="NCBIfam" id="TIGR01066">
    <property type="entry name" value="rplM_bact"/>
    <property type="match status" value="1"/>
</dbReference>
<dbReference type="PANTHER" id="PTHR11545:SF2">
    <property type="entry name" value="LARGE RIBOSOMAL SUBUNIT PROTEIN UL13M"/>
    <property type="match status" value="1"/>
</dbReference>
<dbReference type="PANTHER" id="PTHR11545">
    <property type="entry name" value="RIBOSOMAL PROTEIN L13"/>
    <property type="match status" value="1"/>
</dbReference>
<dbReference type="Pfam" id="PF00572">
    <property type="entry name" value="Ribosomal_L13"/>
    <property type="match status" value="1"/>
</dbReference>
<dbReference type="PIRSF" id="PIRSF002181">
    <property type="entry name" value="Ribosomal_L13"/>
    <property type="match status" value="1"/>
</dbReference>
<dbReference type="SUPFAM" id="SSF52161">
    <property type="entry name" value="Ribosomal protein L13"/>
    <property type="match status" value="1"/>
</dbReference>
<name>RL13_CHLP8</name>
<reference key="1">
    <citation type="submission" date="2008-06" db="EMBL/GenBank/DDBJ databases">
        <title>Complete sequence of Chlorobaculum parvum NCIB 8327.</title>
        <authorList>
            <consortium name="US DOE Joint Genome Institute"/>
            <person name="Lucas S."/>
            <person name="Copeland A."/>
            <person name="Lapidus A."/>
            <person name="Glavina del Rio T."/>
            <person name="Dalin E."/>
            <person name="Tice H."/>
            <person name="Bruce D."/>
            <person name="Goodwin L."/>
            <person name="Pitluck S."/>
            <person name="Schmutz J."/>
            <person name="Larimer F."/>
            <person name="Land M."/>
            <person name="Hauser L."/>
            <person name="Kyrpides N."/>
            <person name="Mikhailova N."/>
            <person name="Zhao F."/>
            <person name="Li T."/>
            <person name="Liu Z."/>
            <person name="Overmann J."/>
            <person name="Bryant D.A."/>
            <person name="Richardson P."/>
        </authorList>
    </citation>
    <scope>NUCLEOTIDE SEQUENCE [LARGE SCALE GENOMIC DNA]</scope>
    <source>
        <strain>DSM 263 / NCIMB 8327</strain>
    </source>
</reference>
<accession>B3QLF5</accession>
<proteinExistence type="inferred from homology"/>
<keyword id="KW-0687">Ribonucleoprotein</keyword>
<keyword id="KW-0689">Ribosomal protein</keyword>
<sequence>MSKTLSFKTYSAKPGEVERAWYVIDAENQVLGRLAAQVATVLRGKHKPQFTPHVDTGDFVVVTNAGKIALSGKKHDDKTYFSHSHYPGGAKFEQAKDLLQKKPEKVIEHAVWGMLPHNNLGRQLFKKLKVYAGPEHPHAAQMPVEMKVNQ</sequence>
<comment type="function">
    <text evidence="1">This protein is one of the early assembly proteins of the 50S ribosomal subunit, although it is not seen to bind rRNA by itself. It is important during the early stages of 50S assembly.</text>
</comment>
<comment type="subunit">
    <text evidence="1">Part of the 50S ribosomal subunit.</text>
</comment>
<comment type="similarity">
    <text evidence="1">Belongs to the universal ribosomal protein uL13 family.</text>
</comment>
<feature type="chain" id="PRO_1000144104" description="Large ribosomal subunit protein uL13">
    <location>
        <begin position="1"/>
        <end position="150"/>
    </location>
</feature>